<comment type="function">
    <text evidence="4 5 7">Specific functional receptor for IL17C, signaling through the NF-kappa-B and MAPK pathways. Requires TRAF3IP2 /ACT1 for signaling. Crucial regulator in innate immunity to bacterial pathogens, such as Citrobacter rodentium. Isoform 4 and isoform 5 may be either cytoplasmic inactive or dominant active forms. Isoform 2 and isoform 3 may act as soluble decoy receptors.</text>
</comment>
<comment type="subunit">
    <text>Forms heterodimers with IL17RA; the heterodimer binds IL17C.</text>
</comment>
<comment type="subcellular location">
    <molecule>Isoform 1</molecule>
    <subcellularLocation>
        <location>Cell membrane</location>
        <topology>Single-pass type I membrane protein</topology>
    </subcellularLocation>
</comment>
<comment type="subcellular location">
    <molecule>Isoform 2</molecule>
    <subcellularLocation>
        <location evidence="12">Secreted</location>
    </subcellularLocation>
</comment>
<comment type="subcellular location">
    <molecule>Isoform 3</molecule>
    <subcellularLocation>
        <location evidence="12">Secreted</location>
    </subcellularLocation>
</comment>
<comment type="subcellular location">
    <molecule>Isoform 4</molecule>
    <subcellularLocation>
        <location evidence="12">Cytoplasm</location>
    </subcellularLocation>
</comment>
<comment type="subcellular location">
    <molecule>Isoform 5</molecule>
    <subcellularLocation>
        <location evidence="12">Cytoplasm</location>
    </subcellularLocation>
</comment>
<comment type="alternative products">
    <event type="alternative splicing"/>
    <isoform>
        <id>Q8BH06-1</id>
        <name>1</name>
        <name>IL-17RE1</name>
        <name>IL17RE-S</name>
        <sequence type="displayed"/>
    </isoform>
    <isoform>
        <id>Q8BH06-2</id>
        <name>2</name>
        <name>IL-17RE2</name>
        <sequence type="described" ref="VSP_029200"/>
    </isoform>
    <isoform>
        <id>Q8BH06-3</id>
        <name>3</name>
        <name>IL-17RE3</name>
        <sequence type="described" ref="VSP_029199"/>
    </isoform>
    <isoform>
        <id>Q8BH06-4</id>
        <name>4</name>
        <name>IL-17RE4</name>
        <name>IL-17RE5</name>
        <name>IL17RE-S</name>
        <sequence type="described" ref="VSP_029198"/>
    </isoform>
    <isoform>
        <id>Q8BH06-5</id>
        <name>5</name>
        <name>IL-17RE6</name>
        <sequence type="described" ref="VSP_029197"/>
    </isoform>
</comment>
<comment type="tissue specificity">
    <text evidence="4 5 6 7">Predominantly expressed in mucosal tissues, including trachea, lung, kidney and stomach. Highly expressed in colon epithelial cells. Also expressed in testis. Low expression, if any, in heart, liver, spleen, or brain. Among CD4 T-helper cells, expressed at high levels in Th17 cells.</text>
</comment>
<comment type="developmental stage">
    <text evidence="4">Expression starts at 10.5 dpc and reaches a plateau of expression at 12.5 dpc.</text>
</comment>
<comment type="induction">
    <text evidence="5">Up-regulated by its own ligand IL17C. Also up-regulated by IL6 and TNF acting synergically. This induction can be further increased by IL23.</text>
</comment>
<comment type="disruption phenotype">
    <text evidence="7">Mutant animals are born normally at the expected Mendelian frequency. They exhibit much lower expression of genes encoding antibacterial molecules, much greater bacterial burdens and total mortality after infection with Citrobacter rodentium.</text>
</comment>
<comment type="sequence caution" evidence="12">
    <conflict type="frameshift">
        <sequence resource="EMBL-CDS" id="BAC37436"/>
    </conflict>
</comment>
<accession>Q8BH06</accession>
<accession>Q3I5F0</accession>
<accession>Q6NSU9</accession>
<accession>Q8C5D0</accession>
<accession>Q8K4C1</accession>
<accession>Q8R335</accession>
<dbReference type="EMBL" id="DQ092339">
    <property type="protein sequence ID" value="AAZ85958.1"/>
    <property type="molecule type" value="mRNA"/>
</dbReference>
<dbReference type="EMBL" id="DQ092340">
    <property type="protein sequence ID" value="AAZ85959.1"/>
    <property type="molecule type" value="mRNA"/>
</dbReference>
<dbReference type="EMBL" id="DQ092341">
    <property type="protein sequence ID" value="AAZ85960.1"/>
    <property type="molecule type" value="mRNA"/>
</dbReference>
<dbReference type="EMBL" id="AF458068">
    <property type="protein sequence ID" value="AAM77572.1"/>
    <property type="molecule type" value="mRNA"/>
</dbReference>
<dbReference type="EMBL" id="AK046302">
    <property type="protein sequence ID" value="BAC32678.1"/>
    <property type="molecule type" value="mRNA"/>
</dbReference>
<dbReference type="EMBL" id="AK046713">
    <property type="protein sequence ID" value="BAC32842.1"/>
    <property type="molecule type" value="mRNA"/>
</dbReference>
<dbReference type="EMBL" id="AK078876">
    <property type="protein sequence ID" value="BAC37436.1"/>
    <property type="status" value="ALT_FRAME"/>
    <property type="molecule type" value="mRNA"/>
</dbReference>
<dbReference type="EMBL" id="AK169498">
    <property type="protein sequence ID" value="BAE41201.1"/>
    <property type="molecule type" value="mRNA"/>
</dbReference>
<dbReference type="EMBL" id="BC026737">
    <property type="protein sequence ID" value="AAH26737.1"/>
    <property type="molecule type" value="mRNA"/>
</dbReference>
<dbReference type="EMBL" id="BC069861">
    <property type="protein sequence ID" value="AAH69861.1"/>
    <property type="molecule type" value="mRNA"/>
</dbReference>
<dbReference type="CCDS" id="CCDS20420.1">
    <molecule id="Q8BH06-1"/>
</dbReference>
<dbReference type="CCDS" id="CCDS20421.1">
    <molecule id="Q8BH06-4"/>
</dbReference>
<dbReference type="CCDS" id="CCDS90101.1">
    <molecule id="Q8BH06-2"/>
</dbReference>
<dbReference type="CCDS" id="CCDS90102.1">
    <molecule id="Q8BH06-3"/>
</dbReference>
<dbReference type="RefSeq" id="NP_001029201.1">
    <molecule id="Q8BH06-4"/>
    <property type="nucleotide sequence ID" value="NM_001034029.2"/>
</dbReference>
<dbReference type="RefSeq" id="NP_001029203.1">
    <molecule id="Q8BH06-4"/>
    <property type="nucleotide sequence ID" value="NM_001034031.2"/>
</dbReference>
<dbReference type="RefSeq" id="NP_001349133.1">
    <molecule id="Q8BH06-3"/>
    <property type="nucleotide sequence ID" value="NM_001362204.1"/>
</dbReference>
<dbReference type="RefSeq" id="NP_001349134.1">
    <molecule id="Q8BH06-2"/>
    <property type="nucleotide sequence ID" value="NM_001362205.1"/>
</dbReference>
<dbReference type="RefSeq" id="NP_665825.2">
    <molecule id="Q8BH06-1"/>
    <property type="nucleotide sequence ID" value="NM_145826.5"/>
</dbReference>
<dbReference type="RefSeq" id="XP_030111379.1">
    <molecule id="Q8BH06-4"/>
    <property type="nucleotide sequence ID" value="XM_030255519.2"/>
</dbReference>
<dbReference type="RefSeq" id="XP_036008141.1">
    <molecule id="Q8BH06-4"/>
    <property type="nucleotide sequence ID" value="XM_036152248.1"/>
</dbReference>
<dbReference type="SMR" id="Q8BH06"/>
<dbReference type="FunCoup" id="Q8BH06">
    <property type="interactions" value="281"/>
</dbReference>
<dbReference type="IntAct" id="Q8BH06">
    <property type="interactions" value="2"/>
</dbReference>
<dbReference type="STRING" id="10090.ENSMUSP00000062103"/>
<dbReference type="GlyCosmos" id="Q8BH06">
    <property type="glycosylation" value="2 sites, No reported glycans"/>
</dbReference>
<dbReference type="GlyGen" id="Q8BH06">
    <property type="glycosylation" value="2 sites"/>
</dbReference>
<dbReference type="PhosphoSitePlus" id="Q8BH06"/>
<dbReference type="PaxDb" id="10090-ENSMUSP00000062103"/>
<dbReference type="Antibodypedia" id="2563">
    <property type="antibodies" value="318 antibodies from 31 providers"/>
</dbReference>
<dbReference type="DNASU" id="57890"/>
<dbReference type="Ensembl" id="ENSMUST00000053569.7">
    <molecule id="Q8BH06-4"/>
    <property type="protein sequence ID" value="ENSMUSP00000054378.5"/>
    <property type="gene ID" value="ENSMUSG00000043088.17"/>
</dbReference>
<dbReference type="Ensembl" id="ENSMUST00000058548.14">
    <molecule id="Q8BH06-1"/>
    <property type="protein sequence ID" value="ENSMUSP00000062103.8"/>
    <property type="gene ID" value="ENSMUSG00000043088.17"/>
</dbReference>
<dbReference type="Ensembl" id="ENSMUST00000101065.8">
    <molecule id="Q8BH06-4"/>
    <property type="protein sequence ID" value="ENSMUSP00000098626.2"/>
    <property type="gene ID" value="ENSMUSG00000043088.17"/>
</dbReference>
<dbReference type="Ensembl" id="ENSMUST00000203661.3">
    <molecule id="Q8BH06-3"/>
    <property type="protein sequence ID" value="ENSMUSP00000145345.2"/>
    <property type="gene ID" value="ENSMUSG00000043088.17"/>
</dbReference>
<dbReference type="Ensembl" id="ENSMUST00000204774.3">
    <molecule id="Q8BH06-2"/>
    <property type="protein sequence ID" value="ENSMUSP00000145384.2"/>
    <property type="gene ID" value="ENSMUSG00000043088.17"/>
</dbReference>
<dbReference type="GeneID" id="57890"/>
<dbReference type="KEGG" id="mmu:57890"/>
<dbReference type="UCSC" id="uc009dgg.1">
    <molecule id="Q8BH06-1"/>
    <property type="organism name" value="mouse"/>
</dbReference>
<dbReference type="UCSC" id="uc009dgj.1">
    <molecule id="Q8BH06-5"/>
    <property type="organism name" value="mouse"/>
</dbReference>
<dbReference type="AGR" id="MGI:1889371"/>
<dbReference type="CTD" id="132014"/>
<dbReference type="MGI" id="MGI:1889371">
    <property type="gene designation" value="Il17re"/>
</dbReference>
<dbReference type="VEuPathDB" id="HostDB:ENSMUSG00000043088"/>
<dbReference type="eggNOG" id="ENOG502QU0I">
    <property type="taxonomic scope" value="Eukaryota"/>
</dbReference>
<dbReference type="GeneTree" id="ENSGT00940000161421"/>
<dbReference type="HOGENOM" id="CLU_026094_0_0_1"/>
<dbReference type="InParanoid" id="Q8BH06"/>
<dbReference type="OMA" id="CPDVSNR"/>
<dbReference type="OrthoDB" id="9894203at2759"/>
<dbReference type="PhylomeDB" id="Q8BH06"/>
<dbReference type="TreeFam" id="TF335690"/>
<dbReference type="BioGRID-ORCS" id="57890">
    <property type="hits" value="1 hit in 78 CRISPR screens"/>
</dbReference>
<dbReference type="ChiTaRS" id="Il17re">
    <property type="organism name" value="mouse"/>
</dbReference>
<dbReference type="PRO" id="PR:Q8BH06"/>
<dbReference type="Proteomes" id="UP000000589">
    <property type="component" value="Chromosome 6"/>
</dbReference>
<dbReference type="RNAct" id="Q8BH06">
    <property type="molecule type" value="protein"/>
</dbReference>
<dbReference type="Bgee" id="ENSMUSG00000043088">
    <property type="expression patterns" value="Expressed in vestibular membrane of cochlear duct and 115 other cell types or tissues"/>
</dbReference>
<dbReference type="ExpressionAtlas" id="Q8BH06">
    <property type="expression patterns" value="baseline and differential"/>
</dbReference>
<dbReference type="GO" id="GO:0005737">
    <property type="term" value="C:cytoplasm"/>
    <property type="evidence" value="ECO:0007669"/>
    <property type="project" value="UniProtKB-SubCell"/>
</dbReference>
<dbReference type="GO" id="GO:0005576">
    <property type="term" value="C:extracellular region"/>
    <property type="evidence" value="ECO:0007669"/>
    <property type="project" value="UniProtKB-SubCell"/>
</dbReference>
<dbReference type="GO" id="GO:0005886">
    <property type="term" value="C:plasma membrane"/>
    <property type="evidence" value="ECO:0007669"/>
    <property type="project" value="UniProtKB-SubCell"/>
</dbReference>
<dbReference type="GO" id="GO:0030368">
    <property type="term" value="F:interleukin-17 receptor activity"/>
    <property type="evidence" value="ECO:0007669"/>
    <property type="project" value="InterPro"/>
</dbReference>
<dbReference type="GO" id="GO:0006954">
    <property type="term" value="P:inflammatory response"/>
    <property type="evidence" value="ECO:0007669"/>
    <property type="project" value="UniProtKB-KW"/>
</dbReference>
<dbReference type="FunFam" id="3.40.50.11530:FF:000006">
    <property type="entry name" value="interleukin-17 receptor E isoform X2"/>
    <property type="match status" value="1"/>
</dbReference>
<dbReference type="Gene3D" id="3.40.50.11530">
    <property type="match status" value="1"/>
</dbReference>
<dbReference type="InterPro" id="IPR039465">
    <property type="entry name" value="IL-17_rcpt-like"/>
</dbReference>
<dbReference type="InterPro" id="IPR027841">
    <property type="entry name" value="IL-17_rcpt_C/E_N"/>
</dbReference>
<dbReference type="InterPro" id="IPR013568">
    <property type="entry name" value="SEFIR_dom"/>
</dbReference>
<dbReference type="PANTHER" id="PTHR15583">
    <property type="entry name" value="INTERLEUKIN-17 RECEPTOR"/>
    <property type="match status" value="1"/>
</dbReference>
<dbReference type="PANTHER" id="PTHR15583:SF5">
    <property type="entry name" value="INTERLEUKIN-17 RECEPTOR E"/>
    <property type="match status" value="1"/>
</dbReference>
<dbReference type="Pfam" id="PF15037">
    <property type="entry name" value="IL17_R_N"/>
    <property type="match status" value="2"/>
</dbReference>
<dbReference type="Pfam" id="PF08357">
    <property type="entry name" value="SEFIR"/>
    <property type="match status" value="1"/>
</dbReference>
<dbReference type="PROSITE" id="PS51534">
    <property type="entry name" value="SEFIR"/>
    <property type="match status" value="1"/>
</dbReference>
<evidence type="ECO:0000255" key="1"/>
<evidence type="ECO:0000255" key="2">
    <source>
        <dbReference type="PROSITE-ProRule" id="PRU00867"/>
    </source>
</evidence>
<evidence type="ECO:0000256" key="3">
    <source>
        <dbReference type="SAM" id="MobiDB-lite"/>
    </source>
</evidence>
<evidence type="ECO:0000269" key="4">
    <source>
    </source>
</evidence>
<evidence type="ECO:0000269" key="5">
    <source>
    </source>
</evidence>
<evidence type="ECO:0000269" key="6">
    <source>
    </source>
</evidence>
<evidence type="ECO:0000269" key="7">
    <source>
    </source>
</evidence>
<evidence type="ECO:0000303" key="8">
    <source>
    </source>
</evidence>
<evidence type="ECO:0000303" key="9">
    <source>
    </source>
</evidence>
<evidence type="ECO:0000303" key="10">
    <source>
    </source>
</evidence>
<evidence type="ECO:0000303" key="11">
    <source ref="2"/>
</evidence>
<evidence type="ECO:0000305" key="12"/>
<feature type="signal peptide" evidence="1">
    <location>
        <begin position="1"/>
        <end position="23"/>
    </location>
</feature>
<feature type="chain" id="PRO_0000309468" description="Interleukin-17 receptor E">
    <location>
        <begin position="24"/>
        <end position="637"/>
    </location>
</feature>
<feature type="topological domain" description="Extracellular" evidence="1">
    <location>
        <begin position="24"/>
        <end position="414"/>
    </location>
</feature>
<feature type="transmembrane region" description="Helical" evidence="1">
    <location>
        <begin position="415"/>
        <end position="435"/>
    </location>
</feature>
<feature type="topological domain" description="Cytoplasmic" evidence="1">
    <location>
        <begin position="436"/>
        <end position="637"/>
    </location>
</feature>
<feature type="domain" description="SEFIR" evidence="2">
    <location>
        <begin position="447"/>
        <end position="583"/>
    </location>
</feature>
<feature type="region of interest" description="Disordered" evidence="3">
    <location>
        <begin position="87"/>
        <end position="134"/>
    </location>
</feature>
<feature type="glycosylation site" description="N-linked (GlcNAc...) asparagine" evidence="1">
    <location>
        <position position="278"/>
    </location>
</feature>
<feature type="glycosylation site" description="N-linked (GlcNAc...) asparagine" evidence="1">
    <location>
        <position position="307"/>
    </location>
</feature>
<feature type="splice variant" id="VSP_029197" description="In isoform 5." evidence="8 9">
    <location>
        <begin position="1"/>
        <end position="326"/>
    </location>
</feature>
<feature type="splice variant" id="VSP_029198" description="In isoform 4." evidence="10">
    <location>
        <begin position="1"/>
        <end position="201"/>
    </location>
</feature>
<feature type="splice variant" id="VSP_029199" description="In isoform 3." evidence="8">
    <location>
        <begin position="410"/>
        <end position="455"/>
    </location>
</feature>
<feature type="splice variant" id="VSP_029200" description="In isoform 2." evidence="11">
    <original>VSHRHLGLLILALLALTALVGVVLVLLGRRLLP</original>
    <variation>DAPYPTQLLLRSL</variation>
    <location>
        <begin position="410"/>
        <end position="442"/>
    </location>
</feature>
<feature type="sequence conflict" description="In Ref. 4; AAH26737." evidence="12" ref="4">
    <original>T</original>
    <variation>M</variation>
    <location>
        <position position="377"/>
    </location>
</feature>
<feature type="sequence conflict" description="In Ref. 4; AAH26737." evidence="12" ref="4">
    <original>H</original>
    <variation>Q</variation>
    <location>
        <position position="399"/>
    </location>
</feature>
<feature type="sequence conflict" description="In Ref. 3; BAC37436." evidence="12" ref="3">
    <original>A</original>
    <variation>P</variation>
    <location>
        <position position="543"/>
    </location>
</feature>
<keyword id="KW-0025">Alternative splicing</keyword>
<keyword id="KW-1003">Cell membrane</keyword>
<keyword id="KW-0963">Cytoplasm</keyword>
<keyword id="KW-0325">Glycoprotein</keyword>
<keyword id="KW-0395">Inflammatory response</keyword>
<keyword id="KW-0472">Membrane</keyword>
<keyword id="KW-0675">Receptor</keyword>
<keyword id="KW-1185">Reference proteome</keyword>
<keyword id="KW-0964">Secreted</keyword>
<keyword id="KW-0732">Signal</keyword>
<keyword id="KW-0812">Transmembrane</keyword>
<keyword id="KW-1133">Transmembrane helix</keyword>
<protein>
    <recommendedName>
        <fullName>Interleukin-17 receptor E</fullName>
        <shortName>IL-17 receptor E</shortName>
        <shortName>IL-17RE</shortName>
    </recommendedName>
</protein>
<proteinExistence type="evidence at protein level"/>
<name>I17RE_MOUSE</name>
<sequence>MGSPRLAALLLSLPLLLIGLAVSARVACPCLRSWTSHCLLAYRVDKRFAGLQWGWFPLLVRKSKSPPKFEDYWRHRTPASFQRKLLGSPSLSEESHRISIPSSAISHRGQRTKRAQPSAAEGREHLPEAGSQKCGGPEFSFDLLPEVQAVRVTIPAGPKASVRLCYQWALECEDLSSPFDTQKIVSGGHTVDLPYEFLLPCMCIEASYLQEDTVRRKKCPFQSWPEAYGSDFWQSIRFTDYSQHNQMVMALTLRCPLKLEASLCWRQDPLTPCETLPNATAQESEGWYILENVDLHPQLCFKFSFENSSHVECPHQSGSLPSWTVSMDTQAQQLTLHFSSRTYATFSAAWSDPGLGPDTPMPPVYSISQTQGSVPVTLDLIIPFLRQENCILVWRSDVHFAWKHVLCPDVSHRHLGLLILALLALTALVGVVLVLLGRRLLPGSGRTRPVLLLHAADSEAQRRLVGALAELLRTALGGGRDVIVDLWEGTHVARIGPLPWLWAARERVAREQGTVLLLWNCAGPSTACSGDPQAASLRTLLCAAPRPLLLAYFSRLCAKGDIPRPLRALPRYRLLRDLPRLLRALDAQPATLASSWSHLGAKRCLKNRLEQCHLLELEAAKDDYQGSTNSPCGFSCL</sequence>
<reference key="1">
    <citation type="journal article" date="2006" name="Cell. Signal.">
        <title>Identification and functional characterization of a novel interleukin 17 receptor: a possible mitogenic activation through ras/mitogen-activated protein kinase signaling pathway.</title>
        <authorList>
            <person name="Li T.-S."/>
            <person name="Li X.-N."/>
            <person name="Chang Z.-J."/>
            <person name="Fu X.-Y."/>
            <person name="Liu L."/>
        </authorList>
    </citation>
    <scope>NUCLEOTIDE SEQUENCE [MRNA] (ISOFORMS 1 AND 4)</scope>
    <scope>FUNCTION</scope>
    <scope>SUBCELLULAR LOCATION</scope>
    <scope>TISSUE SPECIFICITY</scope>
    <scope>DEVELOPMENTAL STAGE</scope>
</reference>
<reference key="2">
    <citation type="submission" date="2001-12" db="EMBL/GenBank/DDBJ databases">
        <title>Identification of novel IL-17 related receptors.</title>
        <authorList>
            <person name="Gilbert J.M."/>
            <person name="Gorman D.M."/>
        </authorList>
    </citation>
    <scope>NUCLEOTIDE SEQUENCE [MRNA] (ISOFORM 2)</scope>
</reference>
<reference key="3">
    <citation type="journal article" date="2005" name="Science">
        <title>The transcriptional landscape of the mammalian genome.</title>
        <authorList>
            <person name="Carninci P."/>
            <person name="Kasukawa T."/>
            <person name="Katayama S."/>
            <person name="Gough J."/>
            <person name="Frith M.C."/>
            <person name="Maeda N."/>
            <person name="Oyama R."/>
            <person name="Ravasi T."/>
            <person name="Lenhard B."/>
            <person name="Wells C."/>
            <person name="Kodzius R."/>
            <person name="Shimokawa K."/>
            <person name="Bajic V.B."/>
            <person name="Brenner S.E."/>
            <person name="Batalov S."/>
            <person name="Forrest A.R."/>
            <person name="Zavolan M."/>
            <person name="Davis M.J."/>
            <person name="Wilming L.G."/>
            <person name="Aidinis V."/>
            <person name="Allen J.E."/>
            <person name="Ambesi-Impiombato A."/>
            <person name="Apweiler R."/>
            <person name="Aturaliya R.N."/>
            <person name="Bailey T.L."/>
            <person name="Bansal M."/>
            <person name="Baxter L."/>
            <person name="Beisel K.W."/>
            <person name="Bersano T."/>
            <person name="Bono H."/>
            <person name="Chalk A.M."/>
            <person name="Chiu K.P."/>
            <person name="Choudhary V."/>
            <person name="Christoffels A."/>
            <person name="Clutterbuck D.R."/>
            <person name="Crowe M.L."/>
            <person name="Dalla E."/>
            <person name="Dalrymple B.P."/>
            <person name="de Bono B."/>
            <person name="Della Gatta G."/>
            <person name="di Bernardo D."/>
            <person name="Down T."/>
            <person name="Engstrom P."/>
            <person name="Fagiolini M."/>
            <person name="Faulkner G."/>
            <person name="Fletcher C.F."/>
            <person name="Fukushima T."/>
            <person name="Furuno M."/>
            <person name="Futaki S."/>
            <person name="Gariboldi M."/>
            <person name="Georgii-Hemming P."/>
            <person name="Gingeras T.R."/>
            <person name="Gojobori T."/>
            <person name="Green R.E."/>
            <person name="Gustincich S."/>
            <person name="Harbers M."/>
            <person name="Hayashi Y."/>
            <person name="Hensch T.K."/>
            <person name="Hirokawa N."/>
            <person name="Hill D."/>
            <person name="Huminiecki L."/>
            <person name="Iacono M."/>
            <person name="Ikeo K."/>
            <person name="Iwama A."/>
            <person name="Ishikawa T."/>
            <person name="Jakt M."/>
            <person name="Kanapin A."/>
            <person name="Katoh M."/>
            <person name="Kawasawa Y."/>
            <person name="Kelso J."/>
            <person name="Kitamura H."/>
            <person name="Kitano H."/>
            <person name="Kollias G."/>
            <person name="Krishnan S.P."/>
            <person name="Kruger A."/>
            <person name="Kummerfeld S.K."/>
            <person name="Kurochkin I.V."/>
            <person name="Lareau L.F."/>
            <person name="Lazarevic D."/>
            <person name="Lipovich L."/>
            <person name="Liu J."/>
            <person name="Liuni S."/>
            <person name="McWilliam S."/>
            <person name="Madan Babu M."/>
            <person name="Madera M."/>
            <person name="Marchionni L."/>
            <person name="Matsuda H."/>
            <person name="Matsuzawa S."/>
            <person name="Miki H."/>
            <person name="Mignone F."/>
            <person name="Miyake S."/>
            <person name="Morris K."/>
            <person name="Mottagui-Tabar S."/>
            <person name="Mulder N."/>
            <person name="Nakano N."/>
            <person name="Nakauchi H."/>
            <person name="Ng P."/>
            <person name="Nilsson R."/>
            <person name="Nishiguchi S."/>
            <person name="Nishikawa S."/>
            <person name="Nori F."/>
            <person name="Ohara O."/>
            <person name="Okazaki Y."/>
            <person name="Orlando V."/>
            <person name="Pang K.C."/>
            <person name="Pavan W.J."/>
            <person name="Pavesi G."/>
            <person name="Pesole G."/>
            <person name="Petrovsky N."/>
            <person name="Piazza S."/>
            <person name="Reed J."/>
            <person name="Reid J.F."/>
            <person name="Ring B.Z."/>
            <person name="Ringwald M."/>
            <person name="Rost B."/>
            <person name="Ruan Y."/>
            <person name="Salzberg S.L."/>
            <person name="Sandelin A."/>
            <person name="Schneider C."/>
            <person name="Schoenbach C."/>
            <person name="Sekiguchi K."/>
            <person name="Semple C.A."/>
            <person name="Seno S."/>
            <person name="Sessa L."/>
            <person name="Sheng Y."/>
            <person name="Shibata Y."/>
            <person name="Shimada H."/>
            <person name="Shimada K."/>
            <person name="Silva D."/>
            <person name="Sinclair B."/>
            <person name="Sperling S."/>
            <person name="Stupka E."/>
            <person name="Sugiura K."/>
            <person name="Sultana R."/>
            <person name="Takenaka Y."/>
            <person name="Taki K."/>
            <person name="Tammoja K."/>
            <person name="Tan S.L."/>
            <person name="Tang S."/>
            <person name="Taylor M.S."/>
            <person name="Tegner J."/>
            <person name="Teichmann S.A."/>
            <person name="Ueda H.R."/>
            <person name="van Nimwegen E."/>
            <person name="Verardo R."/>
            <person name="Wei C.L."/>
            <person name="Yagi K."/>
            <person name="Yamanishi H."/>
            <person name="Zabarovsky E."/>
            <person name="Zhu S."/>
            <person name="Zimmer A."/>
            <person name="Hide W."/>
            <person name="Bult C."/>
            <person name="Grimmond S.M."/>
            <person name="Teasdale R.D."/>
            <person name="Liu E.T."/>
            <person name="Brusic V."/>
            <person name="Quackenbush J."/>
            <person name="Wahlestedt C."/>
            <person name="Mattick J.S."/>
            <person name="Hume D.A."/>
            <person name="Kai C."/>
            <person name="Sasaki D."/>
            <person name="Tomaru Y."/>
            <person name="Fukuda S."/>
            <person name="Kanamori-Katayama M."/>
            <person name="Suzuki M."/>
            <person name="Aoki J."/>
            <person name="Arakawa T."/>
            <person name="Iida J."/>
            <person name="Imamura K."/>
            <person name="Itoh M."/>
            <person name="Kato T."/>
            <person name="Kawaji H."/>
            <person name="Kawagashira N."/>
            <person name="Kawashima T."/>
            <person name="Kojima M."/>
            <person name="Kondo S."/>
            <person name="Konno H."/>
            <person name="Nakano K."/>
            <person name="Ninomiya N."/>
            <person name="Nishio T."/>
            <person name="Okada M."/>
            <person name="Plessy C."/>
            <person name="Shibata K."/>
            <person name="Shiraki T."/>
            <person name="Suzuki S."/>
            <person name="Tagami M."/>
            <person name="Waki K."/>
            <person name="Watahiki A."/>
            <person name="Okamura-Oho Y."/>
            <person name="Suzuki H."/>
            <person name="Kawai J."/>
            <person name="Hayashizaki Y."/>
        </authorList>
    </citation>
    <scope>NUCLEOTIDE SEQUENCE [LARGE SCALE MRNA] (ISOFORMS 1 AND 5)</scope>
    <source>
        <strain>C57BL/6J</strain>
        <tissue>Adipose tissue</tissue>
        <tissue>Colon</tissue>
        <tissue>Corpora quadrigemina</tissue>
        <tissue>Thymus</tissue>
    </source>
</reference>
<reference key="4">
    <citation type="journal article" date="2004" name="Genome Res.">
        <title>The status, quality, and expansion of the NIH full-length cDNA project: the Mammalian Gene Collection (MGC).</title>
        <authorList>
            <consortium name="The MGC Project Team"/>
        </authorList>
    </citation>
    <scope>NUCLEOTIDE SEQUENCE [LARGE SCALE MRNA] (ISOFORMS 3 AND 5)</scope>
    <source>
        <strain>C57BL/6J</strain>
        <strain>Czech II</strain>
        <tissue>Mammary tumor</tissue>
        <tissue>Olfactory epithelium</tissue>
    </source>
</reference>
<reference key="5">
    <citation type="journal article" date="2011" name="Immunity">
        <title>Interleukin-17C promotes Th17 cell responses and autoimmune disease via interleukin-17 receptor E.</title>
        <authorList>
            <person name="Chang S.H."/>
            <person name="Reynolds J.M."/>
            <person name="Pappu B.P."/>
            <person name="Chen G."/>
            <person name="Martinez G.J."/>
            <person name="Dong C."/>
        </authorList>
    </citation>
    <scope>FUNCTION</scope>
    <scope>IDENTIFICATION AS IL17C RECEPTOR</scope>
    <scope>INTERACTION WITH IL17RA</scope>
    <scope>TISSUE SPECIFICITY</scope>
    <scope>INDUCTION</scope>
</reference>
<reference key="6">
    <citation type="journal article" date="2011" name="Nat. Immunol.">
        <title>IL-17RE is the functional receptor for IL-17C and mediates mucosal immunity to infection with intestinal pathogens.</title>
        <authorList>
            <person name="Song X."/>
            <person name="Zhu S."/>
            <person name="Shi P."/>
            <person name="Liu Y."/>
            <person name="Shi Y."/>
            <person name="Levin S.D."/>
            <person name="Qian Y."/>
        </authorList>
    </citation>
    <scope>FUNCTION</scope>
    <scope>IDENTIFICATION AS IL17C RECEPTOR</scope>
    <scope>INTERACTION WITH IL17RA</scope>
    <scope>TISSUE SPECIFICITY</scope>
    <scope>DISRUPTION PHENOTYPE</scope>
</reference>
<reference key="7">
    <citation type="journal article" date="2011" name="Nat. Immunol.">
        <title>IL-17C regulates the innate immune function of epithelial cells in an autocrine manner.</title>
        <authorList>
            <person name="Ramirez-Carrozzi V."/>
            <person name="Sambandam A."/>
            <person name="Luis E."/>
            <person name="Lin Z."/>
            <person name="Jeet S."/>
            <person name="Lesch J."/>
            <person name="Hackney J."/>
            <person name="Kim J."/>
            <person name="Zhou M."/>
            <person name="Lai J."/>
            <person name="Modrusan Z."/>
            <person name="Sai T."/>
            <person name="Lee W."/>
            <person name="Xu M."/>
            <person name="Caplazi P."/>
            <person name="Diehl L."/>
            <person name="de Voss J."/>
            <person name="Balazs M."/>
            <person name="Gonzalez L. Jr."/>
            <person name="Singh H."/>
            <person name="Ouyang W."/>
            <person name="Pappu R."/>
        </authorList>
    </citation>
    <scope>TISSUE SPECIFICITY</scope>
</reference>
<organism>
    <name type="scientific">Mus musculus</name>
    <name type="common">Mouse</name>
    <dbReference type="NCBI Taxonomy" id="10090"/>
    <lineage>
        <taxon>Eukaryota</taxon>
        <taxon>Metazoa</taxon>
        <taxon>Chordata</taxon>
        <taxon>Craniata</taxon>
        <taxon>Vertebrata</taxon>
        <taxon>Euteleostomi</taxon>
        <taxon>Mammalia</taxon>
        <taxon>Eutheria</taxon>
        <taxon>Euarchontoglires</taxon>
        <taxon>Glires</taxon>
        <taxon>Rodentia</taxon>
        <taxon>Myomorpha</taxon>
        <taxon>Muroidea</taxon>
        <taxon>Muridae</taxon>
        <taxon>Murinae</taxon>
        <taxon>Mus</taxon>
        <taxon>Mus</taxon>
    </lineage>
</organism>
<gene>
    <name type="primary">Il17re</name>
</gene>